<protein>
    <recommendedName>
        <fullName evidence="1">Methionine--tRNA ligase</fullName>
        <ecNumber evidence="1">6.1.1.10</ecNumber>
    </recommendedName>
    <alternativeName>
        <fullName evidence="1">Methionyl-tRNA synthetase</fullName>
        <shortName evidence="1">MetRS</shortName>
    </alternativeName>
</protein>
<reference key="1">
    <citation type="submission" date="2007-03" db="EMBL/GenBank/DDBJ databases">
        <title>Complete sequence of Prosthecochloris vibrioformis DSM 265.</title>
        <authorList>
            <consortium name="US DOE Joint Genome Institute"/>
            <person name="Copeland A."/>
            <person name="Lucas S."/>
            <person name="Lapidus A."/>
            <person name="Barry K."/>
            <person name="Detter J.C."/>
            <person name="Glavina del Rio T."/>
            <person name="Hammon N."/>
            <person name="Israni S."/>
            <person name="Pitluck S."/>
            <person name="Schmutz J."/>
            <person name="Larimer F."/>
            <person name="Land M."/>
            <person name="Hauser L."/>
            <person name="Mikhailova N."/>
            <person name="Li T."/>
            <person name="Overmann J."/>
            <person name="Schuster S.C."/>
            <person name="Bryant D.A."/>
            <person name="Richardson P."/>
        </authorList>
    </citation>
    <scope>NUCLEOTIDE SEQUENCE [LARGE SCALE GENOMIC DNA]</scope>
    <source>
        <strain>DSM 265 / 1930</strain>
    </source>
</reference>
<name>SYM_CHLPM</name>
<keyword id="KW-0030">Aminoacyl-tRNA synthetase</keyword>
<keyword id="KW-0067">ATP-binding</keyword>
<keyword id="KW-0963">Cytoplasm</keyword>
<keyword id="KW-0436">Ligase</keyword>
<keyword id="KW-0479">Metal-binding</keyword>
<keyword id="KW-0547">Nucleotide-binding</keyword>
<keyword id="KW-0648">Protein biosynthesis</keyword>
<keyword id="KW-0694">RNA-binding</keyword>
<keyword id="KW-0820">tRNA-binding</keyword>
<keyword id="KW-0862">Zinc</keyword>
<comment type="function">
    <text evidence="1">Is required not only for elongation of protein synthesis but also for the initiation of all mRNA translation through initiator tRNA(fMet) aminoacylation.</text>
</comment>
<comment type="catalytic activity">
    <reaction evidence="1">
        <text>tRNA(Met) + L-methionine + ATP = L-methionyl-tRNA(Met) + AMP + diphosphate</text>
        <dbReference type="Rhea" id="RHEA:13481"/>
        <dbReference type="Rhea" id="RHEA-COMP:9667"/>
        <dbReference type="Rhea" id="RHEA-COMP:9698"/>
        <dbReference type="ChEBI" id="CHEBI:30616"/>
        <dbReference type="ChEBI" id="CHEBI:33019"/>
        <dbReference type="ChEBI" id="CHEBI:57844"/>
        <dbReference type="ChEBI" id="CHEBI:78442"/>
        <dbReference type="ChEBI" id="CHEBI:78530"/>
        <dbReference type="ChEBI" id="CHEBI:456215"/>
        <dbReference type="EC" id="6.1.1.10"/>
    </reaction>
</comment>
<comment type="cofactor">
    <cofactor evidence="1">
        <name>Zn(2+)</name>
        <dbReference type="ChEBI" id="CHEBI:29105"/>
    </cofactor>
    <text evidence="1">Binds 1 zinc ion per subunit.</text>
</comment>
<comment type="subunit">
    <text evidence="1">Homodimer.</text>
</comment>
<comment type="subcellular location">
    <subcellularLocation>
        <location evidence="1">Cytoplasm</location>
    </subcellularLocation>
</comment>
<comment type="similarity">
    <text evidence="1">Belongs to the class-I aminoacyl-tRNA synthetase family. MetG type 1 subfamily.</text>
</comment>
<dbReference type="EC" id="6.1.1.10" evidence="1"/>
<dbReference type="EMBL" id="CP000607">
    <property type="protein sequence ID" value="ABP36786.1"/>
    <property type="molecule type" value="Genomic_DNA"/>
</dbReference>
<dbReference type="SMR" id="A4SE77"/>
<dbReference type="STRING" id="290318.Cvib_0771"/>
<dbReference type="KEGG" id="pvi:Cvib_0771"/>
<dbReference type="eggNOG" id="COG0073">
    <property type="taxonomic scope" value="Bacteria"/>
</dbReference>
<dbReference type="eggNOG" id="COG0143">
    <property type="taxonomic scope" value="Bacteria"/>
</dbReference>
<dbReference type="HOGENOM" id="CLU_009710_1_2_10"/>
<dbReference type="OrthoDB" id="9810191at2"/>
<dbReference type="GO" id="GO:0005829">
    <property type="term" value="C:cytosol"/>
    <property type="evidence" value="ECO:0007669"/>
    <property type="project" value="TreeGrafter"/>
</dbReference>
<dbReference type="GO" id="GO:0005524">
    <property type="term" value="F:ATP binding"/>
    <property type="evidence" value="ECO:0007669"/>
    <property type="project" value="UniProtKB-UniRule"/>
</dbReference>
<dbReference type="GO" id="GO:0046872">
    <property type="term" value="F:metal ion binding"/>
    <property type="evidence" value="ECO:0007669"/>
    <property type="project" value="UniProtKB-KW"/>
</dbReference>
<dbReference type="GO" id="GO:0004825">
    <property type="term" value="F:methionine-tRNA ligase activity"/>
    <property type="evidence" value="ECO:0007669"/>
    <property type="project" value="UniProtKB-UniRule"/>
</dbReference>
<dbReference type="GO" id="GO:0000049">
    <property type="term" value="F:tRNA binding"/>
    <property type="evidence" value="ECO:0007669"/>
    <property type="project" value="UniProtKB-KW"/>
</dbReference>
<dbReference type="GO" id="GO:0006431">
    <property type="term" value="P:methionyl-tRNA aminoacylation"/>
    <property type="evidence" value="ECO:0007669"/>
    <property type="project" value="UniProtKB-UniRule"/>
</dbReference>
<dbReference type="CDD" id="cd07957">
    <property type="entry name" value="Anticodon_Ia_Met"/>
    <property type="match status" value="1"/>
</dbReference>
<dbReference type="CDD" id="cd00814">
    <property type="entry name" value="MetRS_core"/>
    <property type="match status" value="1"/>
</dbReference>
<dbReference type="CDD" id="cd02800">
    <property type="entry name" value="tRNA_bind_EcMetRS_like"/>
    <property type="match status" value="1"/>
</dbReference>
<dbReference type="FunFam" id="2.20.28.20:FF:000001">
    <property type="entry name" value="Methionine--tRNA ligase"/>
    <property type="match status" value="1"/>
</dbReference>
<dbReference type="FunFam" id="2.40.50.140:FF:000042">
    <property type="entry name" value="Methionine--tRNA ligase"/>
    <property type="match status" value="1"/>
</dbReference>
<dbReference type="Gene3D" id="3.40.50.620">
    <property type="entry name" value="HUPs"/>
    <property type="match status" value="1"/>
</dbReference>
<dbReference type="Gene3D" id="1.10.730.10">
    <property type="entry name" value="Isoleucyl-tRNA Synthetase, Domain 1"/>
    <property type="match status" value="1"/>
</dbReference>
<dbReference type="Gene3D" id="2.20.28.20">
    <property type="entry name" value="Methionyl-tRNA synthetase, Zn-domain"/>
    <property type="match status" value="1"/>
</dbReference>
<dbReference type="Gene3D" id="2.40.50.140">
    <property type="entry name" value="Nucleic acid-binding proteins"/>
    <property type="match status" value="1"/>
</dbReference>
<dbReference type="HAMAP" id="MF_00098">
    <property type="entry name" value="Met_tRNA_synth_type1"/>
    <property type="match status" value="1"/>
</dbReference>
<dbReference type="InterPro" id="IPR001412">
    <property type="entry name" value="aa-tRNA-synth_I_CS"/>
</dbReference>
<dbReference type="InterPro" id="IPR041872">
    <property type="entry name" value="Anticodon_Met"/>
</dbReference>
<dbReference type="InterPro" id="IPR004495">
    <property type="entry name" value="Met-tRNA-synth_bsu_C"/>
</dbReference>
<dbReference type="InterPro" id="IPR023458">
    <property type="entry name" value="Met-tRNA_ligase_1"/>
</dbReference>
<dbReference type="InterPro" id="IPR014758">
    <property type="entry name" value="Met-tRNA_synth"/>
</dbReference>
<dbReference type="InterPro" id="IPR015413">
    <property type="entry name" value="Methionyl/Leucyl_tRNA_Synth"/>
</dbReference>
<dbReference type="InterPro" id="IPR033911">
    <property type="entry name" value="MetRS_core"/>
</dbReference>
<dbReference type="InterPro" id="IPR029038">
    <property type="entry name" value="MetRS_Zn"/>
</dbReference>
<dbReference type="InterPro" id="IPR012340">
    <property type="entry name" value="NA-bd_OB-fold"/>
</dbReference>
<dbReference type="InterPro" id="IPR014729">
    <property type="entry name" value="Rossmann-like_a/b/a_fold"/>
</dbReference>
<dbReference type="InterPro" id="IPR002547">
    <property type="entry name" value="tRNA-bd_dom"/>
</dbReference>
<dbReference type="InterPro" id="IPR009080">
    <property type="entry name" value="tRNAsynth_Ia_anticodon-bd"/>
</dbReference>
<dbReference type="NCBIfam" id="TIGR00398">
    <property type="entry name" value="metG"/>
    <property type="match status" value="1"/>
</dbReference>
<dbReference type="NCBIfam" id="TIGR00399">
    <property type="entry name" value="metG_C_term"/>
    <property type="match status" value="1"/>
</dbReference>
<dbReference type="NCBIfam" id="NF001100">
    <property type="entry name" value="PRK00133.1"/>
    <property type="match status" value="1"/>
</dbReference>
<dbReference type="PANTHER" id="PTHR45765">
    <property type="entry name" value="METHIONINE--TRNA LIGASE"/>
    <property type="match status" value="1"/>
</dbReference>
<dbReference type="PANTHER" id="PTHR45765:SF1">
    <property type="entry name" value="METHIONINE--TRNA LIGASE, CYTOPLASMIC"/>
    <property type="match status" value="1"/>
</dbReference>
<dbReference type="Pfam" id="PF19303">
    <property type="entry name" value="Anticodon_3"/>
    <property type="match status" value="1"/>
</dbReference>
<dbReference type="Pfam" id="PF09334">
    <property type="entry name" value="tRNA-synt_1g"/>
    <property type="match status" value="1"/>
</dbReference>
<dbReference type="Pfam" id="PF01588">
    <property type="entry name" value="tRNA_bind"/>
    <property type="match status" value="1"/>
</dbReference>
<dbReference type="PRINTS" id="PR01041">
    <property type="entry name" value="TRNASYNTHMET"/>
</dbReference>
<dbReference type="SUPFAM" id="SSF47323">
    <property type="entry name" value="Anticodon-binding domain of a subclass of class I aminoacyl-tRNA synthetases"/>
    <property type="match status" value="1"/>
</dbReference>
<dbReference type="SUPFAM" id="SSF57770">
    <property type="entry name" value="Methionyl-tRNA synthetase (MetRS), Zn-domain"/>
    <property type="match status" value="1"/>
</dbReference>
<dbReference type="SUPFAM" id="SSF50249">
    <property type="entry name" value="Nucleic acid-binding proteins"/>
    <property type="match status" value="1"/>
</dbReference>
<dbReference type="SUPFAM" id="SSF52374">
    <property type="entry name" value="Nucleotidylyl transferase"/>
    <property type="match status" value="1"/>
</dbReference>
<dbReference type="PROSITE" id="PS00178">
    <property type="entry name" value="AA_TRNA_LIGASE_I"/>
    <property type="match status" value="1"/>
</dbReference>
<dbReference type="PROSITE" id="PS50886">
    <property type="entry name" value="TRBD"/>
    <property type="match status" value="1"/>
</dbReference>
<gene>
    <name evidence="1" type="primary">metG</name>
    <name type="ordered locus">Cvib_0771</name>
</gene>
<sequence>MPQFQRTLVTTALPYANGPVHLGHLAGVYLPADLFVRYKRLQGEDVIHIGGSDEHGVPITITAEKEGITPRDVVDRYHSMNLEAFKRCGISFDYYGRTSSELHHKTAQEFFLEIEGKGIFERKTEKLFYDASACRFLSDRYVTGTCPICGNTEANGDQCEQCGTHLSPLELINPKSKLSDATPELRETLHWYFPLGRFQKQLEAFVGSHDDDWRANVLNYTRTWLNQGLNDRAITRDLSWGIKVPLQDPEAEGKVLYVWFDAVLGYVSFAREWAVLQGSPDRWKEYWQNPDSRVVNFIGKDNVVFHTLMLPAILMAWNEGRSDSIYNLADNVPASEFMNFEGRKFSKSRNYAVYLGEFLDKFPAETLRYSIAMNYPENKDSDFSWTDFQNRTNGELADTLGNFIKRSVDFTNSRFEGIVPHACSRQEWDSLGINWADTIHQLDEAFEGFHFREAVSAAMDIARAANRFLTGAEPWKAIKEDRDGAARTMALSLNLCHALSIALYPVLPETANRIHSMLGFQGTIESLFKRGVPLYKSLTEPALPMGHSLSGESEILFAKIDDAMIEPELRNIERLLAEAQAREAGATAEKMEFKPLIEFDDFQKVDLRAASVISAEKVKKASKLLKLQLQVGSTTRQVLAGVAEHYSPEEMVGKNVLLVANLAPRTIRGEVSEGMLLAVEGDAGKLYMVEPQGEKINGSSVQ</sequence>
<feature type="chain" id="PRO_0000331864" description="Methionine--tRNA ligase">
    <location>
        <begin position="1"/>
        <end position="702"/>
    </location>
</feature>
<feature type="domain" description="tRNA-binding" evidence="1">
    <location>
        <begin position="601"/>
        <end position="702"/>
    </location>
</feature>
<feature type="short sequence motif" description="'HIGH' region">
    <location>
        <begin position="14"/>
        <end position="24"/>
    </location>
</feature>
<feature type="short sequence motif" description="'KMSKS' region">
    <location>
        <begin position="344"/>
        <end position="348"/>
    </location>
</feature>
<feature type="binding site" evidence="1">
    <location>
        <position position="146"/>
    </location>
    <ligand>
        <name>Zn(2+)</name>
        <dbReference type="ChEBI" id="CHEBI:29105"/>
    </ligand>
</feature>
<feature type="binding site" evidence="1">
    <location>
        <position position="149"/>
    </location>
    <ligand>
        <name>Zn(2+)</name>
        <dbReference type="ChEBI" id="CHEBI:29105"/>
    </ligand>
</feature>
<feature type="binding site" evidence="1">
    <location>
        <position position="159"/>
    </location>
    <ligand>
        <name>Zn(2+)</name>
        <dbReference type="ChEBI" id="CHEBI:29105"/>
    </ligand>
</feature>
<feature type="binding site" evidence="1">
    <location>
        <position position="162"/>
    </location>
    <ligand>
        <name>Zn(2+)</name>
        <dbReference type="ChEBI" id="CHEBI:29105"/>
    </ligand>
</feature>
<feature type="binding site" evidence="1">
    <location>
        <position position="347"/>
    </location>
    <ligand>
        <name>ATP</name>
        <dbReference type="ChEBI" id="CHEBI:30616"/>
    </ligand>
</feature>
<proteinExistence type="inferred from homology"/>
<accession>A4SE77</accession>
<evidence type="ECO:0000255" key="1">
    <source>
        <dbReference type="HAMAP-Rule" id="MF_00098"/>
    </source>
</evidence>
<organism>
    <name type="scientific">Chlorobium phaeovibrioides (strain DSM 265 / 1930)</name>
    <name type="common">Prosthecochloris vibrioformis (strain DSM 265)</name>
    <dbReference type="NCBI Taxonomy" id="290318"/>
    <lineage>
        <taxon>Bacteria</taxon>
        <taxon>Pseudomonadati</taxon>
        <taxon>Chlorobiota</taxon>
        <taxon>Chlorobiia</taxon>
        <taxon>Chlorobiales</taxon>
        <taxon>Chlorobiaceae</taxon>
        <taxon>Chlorobium/Pelodictyon group</taxon>
        <taxon>Chlorobium</taxon>
    </lineage>
</organism>